<comment type="function">
    <text evidence="1">One of the primary rRNA binding proteins, it binds specifically to the 5'-end of 16S ribosomal RNA.</text>
</comment>
<comment type="subunit">
    <text evidence="1">Part of the 30S ribosomal subunit.</text>
</comment>
<comment type="similarity">
    <text evidence="1">Belongs to the universal ribosomal protein uS17 family.</text>
</comment>
<dbReference type="EMBL" id="CP000727">
    <property type="protein sequence ID" value="ABS37655.1"/>
    <property type="molecule type" value="Genomic_DNA"/>
</dbReference>
<dbReference type="EMBL" id="AM412317">
    <property type="protein sequence ID" value="CAL85032.1"/>
    <property type="molecule type" value="Genomic_DNA"/>
</dbReference>
<dbReference type="RefSeq" id="WP_003357552.1">
    <property type="nucleotide sequence ID" value="NC_009698.1"/>
</dbReference>
<dbReference type="RefSeq" id="YP_001255953.1">
    <property type="nucleotide sequence ID" value="NC_009495.1"/>
</dbReference>
<dbReference type="RefSeq" id="YP_001389194.1">
    <property type="nucleotide sequence ID" value="NC_009698.1"/>
</dbReference>
<dbReference type="SMR" id="A5I7J7"/>
<dbReference type="GeneID" id="5186963"/>
<dbReference type="KEGG" id="cbh:CLC_3416"/>
<dbReference type="KEGG" id="cbo:CBO3472"/>
<dbReference type="PATRIC" id="fig|413999.7.peg.3448"/>
<dbReference type="HOGENOM" id="CLU_073626_1_0_9"/>
<dbReference type="PRO" id="PR:A5I7J7"/>
<dbReference type="Proteomes" id="UP000001986">
    <property type="component" value="Chromosome"/>
</dbReference>
<dbReference type="GO" id="GO:1990904">
    <property type="term" value="C:ribonucleoprotein complex"/>
    <property type="evidence" value="ECO:0007669"/>
    <property type="project" value="UniProtKB-KW"/>
</dbReference>
<dbReference type="GO" id="GO:0005840">
    <property type="term" value="C:ribosome"/>
    <property type="evidence" value="ECO:0007669"/>
    <property type="project" value="UniProtKB-KW"/>
</dbReference>
<dbReference type="GO" id="GO:0019843">
    <property type="term" value="F:rRNA binding"/>
    <property type="evidence" value="ECO:0007669"/>
    <property type="project" value="UniProtKB-UniRule"/>
</dbReference>
<dbReference type="GO" id="GO:0003735">
    <property type="term" value="F:structural constituent of ribosome"/>
    <property type="evidence" value="ECO:0007669"/>
    <property type="project" value="InterPro"/>
</dbReference>
<dbReference type="GO" id="GO:0006412">
    <property type="term" value="P:translation"/>
    <property type="evidence" value="ECO:0007669"/>
    <property type="project" value="UniProtKB-UniRule"/>
</dbReference>
<dbReference type="CDD" id="cd00364">
    <property type="entry name" value="Ribosomal_uS17"/>
    <property type="match status" value="1"/>
</dbReference>
<dbReference type="FunFam" id="2.40.50.140:FF:000026">
    <property type="entry name" value="30S ribosomal protein S17"/>
    <property type="match status" value="1"/>
</dbReference>
<dbReference type="Gene3D" id="2.40.50.140">
    <property type="entry name" value="Nucleic acid-binding proteins"/>
    <property type="match status" value="1"/>
</dbReference>
<dbReference type="HAMAP" id="MF_01345_B">
    <property type="entry name" value="Ribosomal_uS17_B"/>
    <property type="match status" value="1"/>
</dbReference>
<dbReference type="InterPro" id="IPR012340">
    <property type="entry name" value="NA-bd_OB-fold"/>
</dbReference>
<dbReference type="InterPro" id="IPR000266">
    <property type="entry name" value="Ribosomal_uS17"/>
</dbReference>
<dbReference type="InterPro" id="IPR019984">
    <property type="entry name" value="Ribosomal_uS17_bact/chlr"/>
</dbReference>
<dbReference type="NCBIfam" id="NF004123">
    <property type="entry name" value="PRK05610.1"/>
    <property type="match status" value="1"/>
</dbReference>
<dbReference type="NCBIfam" id="TIGR03635">
    <property type="entry name" value="uS17_bact"/>
    <property type="match status" value="1"/>
</dbReference>
<dbReference type="PANTHER" id="PTHR10744">
    <property type="entry name" value="40S RIBOSOMAL PROTEIN S11 FAMILY MEMBER"/>
    <property type="match status" value="1"/>
</dbReference>
<dbReference type="PANTHER" id="PTHR10744:SF1">
    <property type="entry name" value="SMALL RIBOSOMAL SUBUNIT PROTEIN US17M"/>
    <property type="match status" value="1"/>
</dbReference>
<dbReference type="Pfam" id="PF00366">
    <property type="entry name" value="Ribosomal_S17"/>
    <property type="match status" value="1"/>
</dbReference>
<dbReference type="PRINTS" id="PR00973">
    <property type="entry name" value="RIBOSOMALS17"/>
</dbReference>
<dbReference type="SUPFAM" id="SSF50249">
    <property type="entry name" value="Nucleic acid-binding proteins"/>
    <property type="match status" value="1"/>
</dbReference>
<keyword id="KW-1185">Reference proteome</keyword>
<keyword id="KW-0687">Ribonucleoprotein</keyword>
<keyword id="KW-0689">Ribosomal protein</keyword>
<keyword id="KW-0694">RNA-binding</keyword>
<keyword id="KW-0699">rRNA-binding</keyword>
<organism>
    <name type="scientific">Clostridium botulinum (strain Hall / ATCC 3502 / NCTC 13319 / Type A)</name>
    <dbReference type="NCBI Taxonomy" id="441771"/>
    <lineage>
        <taxon>Bacteria</taxon>
        <taxon>Bacillati</taxon>
        <taxon>Bacillota</taxon>
        <taxon>Clostridia</taxon>
        <taxon>Eubacteriales</taxon>
        <taxon>Clostridiaceae</taxon>
        <taxon>Clostridium</taxon>
    </lineage>
</organism>
<reference key="1">
    <citation type="journal article" date="2007" name="Genome Res.">
        <title>Genome sequence of a proteolytic (Group I) Clostridium botulinum strain Hall A and comparative analysis of the clostridial genomes.</title>
        <authorList>
            <person name="Sebaihia M."/>
            <person name="Peck M.W."/>
            <person name="Minton N.P."/>
            <person name="Thomson N.R."/>
            <person name="Holden M.T.G."/>
            <person name="Mitchell W.J."/>
            <person name="Carter A.T."/>
            <person name="Bentley S.D."/>
            <person name="Mason D.R."/>
            <person name="Crossman L."/>
            <person name="Paul C.J."/>
            <person name="Ivens A."/>
            <person name="Wells-Bennik M.H.J."/>
            <person name="Davis I.J."/>
            <person name="Cerdeno-Tarraga A.M."/>
            <person name="Churcher C."/>
            <person name="Quail M.A."/>
            <person name="Chillingworth T."/>
            <person name="Feltwell T."/>
            <person name="Fraser A."/>
            <person name="Goodhead I."/>
            <person name="Hance Z."/>
            <person name="Jagels K."/>
            <person name="Larke N."/>
            <person name="Maddison M."/>
            <person name="Moule S."/>
            <person name="Mungall K."/>
            <person name="Norbertczak H."/>
            <person name="Rabbinowitsch E."/>
            <person name="Sanders M."/>
            <person name="Simmonds M."/>
            <person name="White B."/>
            <person name="Whithead S."/>
            <person name="Parkhill J."/>
        </authorList>
    </citation>
    <scope>NUCLEOTIDE SEQUENCE [LARGE SCALE GENOMIC DNA]</scope>
    <source>
        <strain>Hall / ATCC 3502 / NCTC 13319 / Type A</strain>
    </source>
</reference>
<reference key="2">
    <citation type="journal article" date="2007" name="PLoS ONE">
        <title>Analysis of the neurotoxin complex genes in Clostridium botulinum A1-A4 and B1 strains: BoNT/A3, /Ba4 and /B1 clusters are located within plasmids.</title>
        <authorList>
            <person name="Smith T.J."/>
            <person name="Hill K.K."/>
            <person name="Foley B.T."/>
            <person name="Detter J.C."/>
            <person name="Munk A.C."/>
            <person name="Bruce D.C."/>
            <person name="Doggett N.A."/>
            <person name="Smith L.A."/>
            <person name="Marks J.D."/>
            <person name="Xie G."/>
            <person name="Brettin T.S."/>
        </authorList>
    </citation>
    <scope>NUCLEOTIDE SEQUENCE [LARGE SCALE GENOMIC DNA]</scope>
    <source>
        <strain>Hall / ATCC 3502 / NCTC 13319 / Type A</strain>
    </source>
</reference>
<protein>
    <recommendedName>
        <fullName evidence="1">Small ribosomal subunit protein uS17</fullName>
    </recommendedName>
    <alternativeName>
        <fullName evidence="2">30S ribosomal protein S17</fullName>
    </alternativeName>
</protein>
<name>RS17_CLOBH</name>
<gene>
    <name evidence="1" type="primary">rpsQ</name>
    <name type="ordered locus">CBO3472</name>
    <name type="ordered locus">CLC_3416</name>
</gene>
<proteinExistence type="inferred from homology"/>
<feature type="chain" id="PRO_1000054939" description="Small ribosomal subunit protein uS17">
    <location>
        <begin position="1"/>
        <end position="84"/>
    </location>
</feature>
<evidence type="ECO:0000255" key="1">
    <source>
        <dbReference type="HAMAP-Rule" id="MF_01345"/>
    </source>
</evidence>
<evidence type="ECO:0000305" key="2"/>
<sequence length="84" mass="9846">MERSNRKTRIGRVVSNKMDKTIVVAVETKVRHPLYGKIMNRTTKFKAHDENNAANINDKVLIMETRPLSKQKRWRLVEVVEKAK</sequence>
<accession>A5I7J7</accession>
<accession>A7G8S9</accession>